<dbReference type="EC" id="2.7.4.22" evidence="1"/>
<dbReference type="EMBL" id="AE004439">
    <property type="protein sequence ID" value="AAK04070.1"/>
    <property type="molecule type" value="Genomic_DNA"/>
</dbReference>
<dbReference type="RefSeq" id="WP_005725080.1">
    <property type="nucleotide sequence ID" value="NC_002663.1"/>
</dbReference>
<dbReference type="SMR" id="Q9CJL5"/>
<dbReference type="STRING" id="272843.PM1986"/>
<dbReference type="EnsemblBacteria" id="AAK04070">
    <property type="protein sequence ID" value="AAK04070"/>
    <property type="gene ID" value="PM1986"/>
</dbReference>
<dbReference type="GeneID" id="77207313"/>
<dbReference type="KEGG" id="pmu:PM1986"/>
<dbReference type="HOGENOM" id="CLU_033861_0_0_6"/>
<dbReference type="OrthoDB" id="9807458at2"/>
<dbReference type="UniPathway" id="UPA00159">
    <property type="reaction ID" value="UER00275"/>
</dbReference>
<dbReference type="Proteomes" id="UP000000809">
    <property type="component" value="Chromosome"/>
</dbReference>
<dbReference type="GO" id="GO:0005829">
    <property type="term" value="C:cytosol"/>
    <property type="evidence" value="ECO:0007669"/>
    <property type="project" value="TreeGrafter"/>
</dbReference>
<dbReference type="GO" id="GO:0005524">
    <property type="term" value="F:ATP binding"/>
    <property type="evidence" value="ECO:0007669"/>
    <property type="project" value="UniProtKB-KW"/>
</dbReference>
<dbReference type="GO" id="GO:0033862">
    <property type="term" value="F:UMP kinase activity"/>
    <property type="evidence" value="ECO:0007669"/>
    <property type="project" value="UniProtKB-EC"/>
</dbReference>
<dbReference type="GO" id="GO:0044210">
    <property type="term" value="P:'de novo' CTP biosynthetic process"/>
    <property type="evidence" value="ECO:0007669"/>
    <property type="project" value="UniProtKB-UniRule"/>
</dbReference>
<dbReference type="GO" id="GO:0006225">
    <property type="term" value="P:UDP biosynthetic process"/>
    <property type="evidence" value="ECO:0007669"/>
    <property type="project" value="TreeGrafter"/>
</dbReference>
<dbReference type="CDD" id="cd04254">
    <property type="entry name" value="AAK_UMPK-PyrH-Ec"/>
    <property type="match status" value="1"/>
</dbReference>
<dbReference type="FunFam" id="3.40.1160.10:FF:000001">
    <property type="entry name" value="Uridylate kinase"/>
    <property type="match status" value="1"/>
</dbReference>
<dbReference type="Gene3D" id="3.40.1160.10">
    <property type="entry name" value="Acetylglutamate kinase-like"/>
    <property type="match status" value="1"/>
</dbReference>
<dbReference type="HAMAP" id="MF_01220_B">
    <property type="entry name" value="PyrH_B"/>
    <property type="match status" value="1"/>
</dbReference>
<dbReference type="InterPro" id="IPR036393">
    <property type="entry name" value="AceGlu_kinase-like_sf"/>
</dbReference>
<dbReference type="InterPro" id="IPR001048">
    <property type="entry name" value="Asp/Glu/Uridylate_kinase"/>
</dbReference>
<dbReference type="InterPro" id="IPR011817">
    <property type="entry name" value="Uridylate_kinase"/>
</dbReference>
<dbReference type="InterPro" id="IPR015963">
    <property type="entry name" value="Uridylate_kinase_bac"/>
</dbReference>
<dbReference type="NCBIfam" id="TIGR02075">
    <property type="entry name" value="pyrH_bact"/>
    <property type="match status" value="1"/>
</dbReference>
<dbReference type="PANTHER" id="PTHR42833">
    <property type="entry name" value="URIDYLATE KINASE"/>
    <property type="match status" value="1"/>
</dbReference>
<dbReference type="PANTHER" id="PTHR42833:SF4">
    <property type="entry name" value="URIDYLATE KINASE PUMPKIN, CHLOROPLASTIC"/>
    <property type="match status" value="1"/>
</dbReference>
<dbReference type="Pfam" id="PF00696">
    <property type="entry name" value="AA_kinase"/>
    <property type="match status" value="1"/>
</dbReference>
<dbReference type="PIRSF" id="PIRSF005650">
    <property type="entry name" value="Uridylate_kin"/>
    <property type="match status" value="1"/>
</dbReference>
<dbReference type="SUPFAM" id="SSF53633">
    <property type="entry name" value="Carbamate kinase-like"/>
    <property type="match status" value="1"/>
</dbReference>
<accession>Q9CJL5</accession>
<proteinExistence type="inferred from homology"/>
<name>PYRH_PASMU</name>
<reference key="1">
    <citation type="journal article" date="2001" name="Proc. Natl. Acad. Sci. U.S.A.">
        <title>Complete genomic sequence of Pasteurella multocida Pm70.</title>
        <authorList>
            <person name="May B.J."/>
            <person name="Zhang Q."/>
            <person name="Li L.L."/>
            <person name="Paustian M.L."/>
            <person name="Whittam T.S."/>
            <person name="Kapur V."/>
        </authorList>
    </citation>
    <scope>NUCLEOTIDE SEQUENCE [LARGE SCALE GENOMIC DNA]</scope>
    <source>
        <strain>Pm70</strain>
    </source>
</reference>
<comment type="function">
    <text evidence="1">Catalyzes the reversible phosphorylation of UMP to UDP.</text>
</comment>
<comment type="catalytic activity">
    <reaction evidence="1">
        <text>UMP + ATP = UDP + ADP</text>
        <dbReference type="Rhea" id="RHEA:24400"/>
        <dbReference type="ChEBI" id="CHEBI:30616"/>
        <dbReference type="ChEBI" id="CHEBI:57865"/>
        <dbReference type="ChEBI" id="CHEBI:58223"/>
        <dbReference type="ChEBI" id="CHEBI:456216"/>
        <dbReference type="EC" id="2.7.4.22"/>
    </reaction>
</comment>
<comment type="activity regulation">
    <text evidence="1">Allosterically activated by GTP. Inhibited by UTP.</text>
</comment>
<comment type="pathway">
    <text evidence="1">Pyrimidine metabolism; CTP biosynthesis via de novo pathway; UDP from UMP (UMPK route): step 1/1.</text>
</comment>
<comment type="subunit">
    <text evidence="1">Homohexamer.</text>
</comment>
<comment type="subcellular location">
    <subcellularLocation>
        <location evidence="1">Cytoplasm</location>
    </subcellularLocation>
</comment>
<comment type="similarity">
    <text evidence="1">Belongs to the UMP kinase family.</text>
</comment>
<keyword id="KW-0021">Allosteric enzyme</keyword>
<keyword id="KW-0067">ATP-binding</keyword>
<keyword id="KW-0963">Cytoplasm</keyword>
<keyword id="KW-0418">Kinase</keyword>
<keyword id="KW-0547">Nucleotide-binding</keyword>
<keyword id="KW-0665">Pyrimidine biosynthesis</keyword>
<keyword id="KW-1185">Reference proteome</keyword>
<keyword id="KW-0808">Transferase</keyword>
<sequence length="242" mass="26322">MSQPIYKRILLKLSGEALQGDEGFGIDPSILDRMALEIKELVAMGVEVGVVLGGGNLFRGAKLAKAGMNRVVGDHMGMLATVMNGLAMRDALHRADVNAKLMSAFQLNGICDTYNWSEAIKMLREKRVVIFSAGTGSPFFTTDSAACLRGIEIEADVVLKATKVDGVYNCDPAKNADAVLYHQLNYADVIEHELQVMDLAAFTLARDHHMPIRVFNMGKPGALRRVILGEVEGTLICDQKLS</sequence>
<feature type="chain" id="PRO_0000143868" description="Uridylate kinase">
    <location>
        <begin position="1"/>
        <end position="242"/>
    </location>
</feature>
<feature type="region of interest" description="Involved in allosteric activation by GTP" evidence="1">
    <location>
        <begin position="20"/>
        <end position="25"/>
    </location>
</feature>
<feature type="binding site" evidence="1">
    <location>
        <begin position="12"/>
        <end position="15"/>
    </location>
    <ligand>
        <name>ATP</name>
        <dbReference type="ChEBI" id="CHEBI:30616"/>
    </ligand>
</feature>
<feature type="binding site" evidence="1">
    <location>
        <position position="54"/>
    </location>
    <ligand>
        <name>UMP</name>
        <dbReference type="ChEBI" id="CHEBI:57865"/>
    </ligand>
</feature>
<feature type="binding site" evidence="1">
    <location>
        <position position="55"/>
    </location>
    <ligand>
        <name>ATP</name>
        <dbReference type="ChEBI" id="CHEBI:30616"/>
    </ligand>
</feature>
<feature type="binding site" evidence="1">
    <location>
        <position position="59"/>
    </location>
    <ligand>
        <name>ATP</name>
        <dbReference type="ChEBI" id="CHEBI:30616"/>
    </ligand>
</feature>
<feature type="binding site" evidence="1">
    <location>
        <position position="74"/>
    </location>
    <ligand>
        <name>UMP</name>
        <dbReference type="ChEBI" id="CHEBI:57865"/>
    </ligand>
</feature>
<feature type="binding site" evidence="1">
    <location>
        <begin position="135"/>
        <end position="142"/>
    </location>
    <ligand>
        <name>UMP</name>
        <dbReference type="ChEBI" id="CHEBI:57865"/>
    </ligand>
</feature>
<feature type="binding site" evidence="1">
    <location>
        <position position="162"/>
    </location>
    <ligand>
        <name>ATP</name>
        <dbReference type="ChEBI" id="CHEBI:30616"/>
    </ligand>
</feature>
<feature type="binding site" evidence="1">
    <location>
        <position position="168"/>
    </location>
    <ligand>
        <name>ATP</name>
        <dbReference type="ChEBI" id="CHEBI:30616"/>
    </ligand>
</feature>
<feature type="binding site" evidence="1">
    <location>
        <position position="171"/>
    </location>
    <ligand>
        <name>ATP</name>
        <dbReference type="ChEBI" id="CHEBI:30616"/>
    </ligand>
</feature>
<gene>
    <name evidence="1" type="primary">pyrH</name>
    <name type="ordered locus">PM1986</name>
</gene>
<protein>
    <recommendedName>
        <fullName evidence="1">Uridylate kinase</fullName>
        <shortName evidence="1">UK</shortName>
        <ecNumber evidence="1">2.7.4.22</ecNumber>
    </recommendedName>
    <alternativeName>
        <fullName evidence="1">Uridine monophosphate kinase</fullName>
        <shortName evidence="1">UMP kinase</shortName>
        <shortName evidence="1">UMPK</shortName>
    </alternativeName>
</protein>
<organism>
    <name type="scientific">Pasteurella multocida (strain Pm70)</name>
    <dbReference type="NCBI Taxonomy" id="272843"/>
    <lineage>
        <taxon>Bacteria</taxon>
        <taxon>Pseudomonadati</taxon>
        <taxon>Pseudomonadota</taxon>
        <taxon>Gammaproteobacteria</taxon>
        <taxon>Pasteurellales</taxon>
        <taxon>Pasteurellaceae</taxon>
        <taxon>Pasteurella</taxon>
    </lineage>
</organism>
<evidence type="ECO:0000255" key="1">
    <source>
        <dbReference type="HAMAP-Rule" id="MF_01220"/>
    </source>
</evidence>